<accession>Q8NBQ7</accession>
<sequence>MSPLLGLRSELQDTCTSLGLMLSVVLLMGLARVVARQQLHRPVAHAFVLEFLATFQLCCCTHELQLLSEQHPAHPTWTLTLVYFFSLVHGLTLVGTSSNPCGVMMQMMLGGMSPETGAVRLLAQLVSALCSRYCTSALWSLGLTQYHVSERSFACKNPIRVDLLKAVITEAVCSFLFHSALLHFQEVRTKLRIHLLAALITFLVYAGGSLTGAVFNPALALSLHFMCFDEAFPQFFIVYWLAPSLGILLMILMFSFFLPWLHNNHTINKKE</sequence>
<evidence type="ECO:0000250" key="1">
    <source>
        <dbReference type="UniProtKB" id="F6S3G9"/>
    </source>
</evidence>
<evidence type="ECO:0000250" key="2">
    <source>
        <dbReference type="UniProtKB" id="Q8BHH1"/>
    </source>
</evidence>
<evidence type="ECO:0000250" key="3">
    <source>
        <dbReference type="UniProtKB" id="Q96PS8"/>
    </source>
</evidence>
<evidence type="ECO:0000255" key="4"/>
<evidence type="ECO:0000269" key="5">
    <source>
    </source>
</evidence>
<evidence type="ECO:0000269" key="6">
    <source>
    </source>
</evidence>
<evidence type="ECO:0000269" key="7">
    <source>
    </source>
</evidence>
<evidence type="ECO:0000269" key="8">
    <source>
    </source>
</evidence>
<evidence type="ECO:0000269" key="9">
    <source>
    </source>
</evidence>
<evidence type="ECO:0000305" key="10"/>
<evidence type="ECO:0000305" key="11">
    <source>
    </source>
</evidence>
<evidence type="ECO:0000305" key="12">
    <source ref="1"/>
</evidence>
<evidence type="ECO:0000312" key="13">
    <source>
        <dbReference type="HGNC" id="HGNC:19940"/>
    </source>
</evidence>
<feature type="chain" id="PRO_0000063968" description="Aquaporin-11">
    <location>
        <begin position="1"/>
        <end position="271"/>
    </location>
</feature>
<feature type="topological domain" description="Cytoplasmic" evidence="9">
    <location>
        <begin position="1"/>
        <end position="14"/>
    </location>
</feature>
<feature type="transmembrane region" description="Helical; Name=1" evidence="4">
    <location>
        <begin position="15"/>
        <end position="35"/>
    </location>
</feature>
<feature type="topological domain" description="Lumenal" evidence="11">
    <location>
        <begin position="36"/>
        <end position="41"/>
    </location>
</feature>
<feature type="transmembrane region" description="Helical; Name=2" evidence="4">
    <location>
        <begin position="42"/>
        <end position="62"/>
    </location>
</feature>
<feature type="topological domain" description="Cytoplasmic" evidence="11">
    <location>
        <begin position="63"/>
        <end position="74"/>
    </location>
</feature>
<feature type="transmembrane region" description="Helical; Name=3" evidence="4">
    <location>
        <begin position="75"/>
        <end position="95"/>
    </location>
</feature>
<feature type="topological domain" description="Lumenal" evidence="11">
    <location>
        <begin position="96"/>
        <end position="163"/>
    </location>
</feature>
<feature type="transmembrane region" description="Helical; Name=4" evidence="4">
    <location>
        <begin position="164"/>
        <end position="184"/>
    </location>
</feature>
<feature type="topological domain" description="Cytoplasmic" evidence="11">
    <location>
        <begin position="185"/>
        <end position="194"/>
    </location>
</feature>
<feature type="transmembrane region" description="Helical; Name=5" evidence="4">
    <location>
        <begin position="195"/>
        <end position="215"/>
    </location>
</feature>
<feature type="topological domain" description="Lumenal" evidence="11">
    <location>
        <begin position="216"/>
        <end position="234"/>
    </location>
</feature>
<feature type="transmembrane region" description="Helical; Name=6" evidence="4">
    <location>
        <begin position="235"/>
        <end position="255"/>
    </location>
</feature>
<feature type="topological domain" description="Cytoplasmic" evidence="9">
    <location>
        <begin position="256"/>
        <end position="271"/>
    </location>
</feature>
<feature type="short sequence motif" description="NPC" evidence="3">
    <location>
        <begin position="99"/>
        <end position="101"/>
    </location>
</feature>
<feature type="short sequence motif" description="NPA" evidence="3">
    <location>
        <begin position="216"/>
        <end position="218"/>
    </location>
</feature>
<feature type="sequence variant" id="VAR_020446" description="In dbSNP:rs2276415.">
    <original>G</original>
    <variation>S</variation>
    <location>
        <position position="102"/>
    </location>
</feature>
<feature type="mutagenesis site" description="Does not affect endoplasmic reticulum localization. Does not affect trafficking to the plasma membrane. Increases osmotic water permeability. Decreases homomultimerization." evidence="7">
    <original>C</original>
    <variation>A</variation>
    <location>
        <position position="227"/>
    </location>
</feature>
<feature type="mutagenesis site" description="Does not affect endoplasmic reticulum localization. Does not affect trafficking to the plasma membrane. Reduces protein expression. Increases osmotic water permeability." evidence="7">
    <original>C</original>
    <variation>S</variation>
    <location>
        <position position="227"/>
    </location>
</feature>
<proteinExistence type="evidence at protein level"/>
<reference key="1">
    <citation type="submission" date="1999-05" db="EMBL/GenBank/DDBJ databases">
        <title>Cloning of a new superfamily of aquaporin.</title>
        <authorList>
            <person name="Ishibashi K."/>
        </authorList>
    </citation>
    <scope>NUCLEOTIDE SEQUENCE [MRNA]</scope>
</reference>
<reference key="2">
    <citation type="journal article" date="2005" name="DNA Res.">
        <title>Signal sequence and keyword trap in silico for selection of full-length human cDNAs encoding secretion or membrane proteins from oligo-capped cDNA libraries.</title>
        <authorList>
            <person name="Otsuki T."/>
            <person name="Ota T."/>
            <person name="Nishikawa T."/>
            <person name="Hayashi K."/>
            <person name="Suzuki Y."/>
            <person name="Yamamoto J."/>
            <person name="Wakamatsu A."/>
            <person name="Kimura K."/>
            <person name="Sakamoto K."/>
            <person name="Hatano N."/>
            <person name="Kawai Y."/>
            <person name="Ishii S."/>
            <person name="Saito K."/>
            <person name="Kojima S."/>
            <person name="Sugiyama T."/>
            <person name="Ono T."/>
            <person name="Okano K."/>
            <person name="Yoshikawa Y."/>
            <person name="Aotsuka S."/>
            <person name="Sasaki N."/>
            <person name="Hattori A."/>
            <person name="Okumura K."/>
            <person name="Nagai K."/>
            <person name="Sugano S."/>
            <person name="Isogai T."/>
        </authorList>
    </citation>
    <scope>NUCLEOTIDE SEQUENCE [LARGE SCALE MRNA]</scope>
    <source>
        <tissue>Teratocarcinoma</tissue>
    </source>
</reference>
<reference key="3">
    <citation type="journal article" date="2004" name="Genome Res.">
        <title>The status, quality, and expansion of the NIH full-length cDNA project: the Mammalian Gene Collection (MGC).</title>
        <authorList>
            <consortium name="The MGC Project Team"/>
        </authorList>
    </citation>
    <scope>NUCLEOTIDE SEQUENCE [LARGE SCALE MRNA]</scope>
    <source>
        <tissue>Brain</tissue>
    </source>
</reference>
<reference key="4">
    <citation type="journal article" date="2010" name="Reproduction">
        <title>Aquaporin AQP11 in the testis: molecular identity and association with the processing of residual cytoplasm of elongated spermatids.</title>
        <authorList>
            <person name="Yeung C.H."/>
            <person name="Cooper T.G."/>
        </authorList>
    </citation>
    <scope>TISSUE SPECIFICITY</scope>
</reference>
<reference key="5">
    <citation type="journal article" date="2014" name="FEBS Open Bio">
        <title>The role of Cysteine 227 in subcellular localization, water permeability, and multimerization of aquaporin-11.</title>
        <authorList>
            <person name="Takahashi S."/>
            <person name="Muta K."/>
            <person name="Sonoda H."/>
            <person name="Kato A."/>
            <person name="Abdeen A."/>
            <person name="Ikeda M."/>
        </authorList>
    </citation>
    <scope>FUNCTION</scope>
    <scope>TRANSPORTER ACTIVITY</scope>
    <scope>SUBUNIT</scope>
    <scope>SUBCELLULAR LOCATION</scope>
    <scope>MUTAGENESIS OF CYS-227</scope>
</reference>
<reference key="6">
    <citation type="journal article" date="2014" name="Obesity">
        <title>Human aquaporin-11 is a water and glycerol channel and localizes in the vicinity of lipid droplets in human adipocytes.</title>
        <authorList>
            <person name="Madeira A."/>
            <person name="Fernandez-Veledo S."/>
            <person name="Camps M."/>
            <person name="Zorzano A."/>
            <person name="Moura T.F."/>
            <person name="Ceperuelo-Mallafre V."/>
            <person name="Vendrell J."/>
            <person name="Soveral G."/>
        </authorList>
    </citation>
    <scope>FUNCTION</scope>
    <scope>TRANSPORTER ACTIVITY</scope>
    <scope>SUBCELLULAR LOCATION</scope>
    <scope>TISSUE SPECIFICITY</scope>
</reference>
<reference key="7">
    <citation type="journal article" date="2016" name="Int. J. Mol. Sci.">
        <title>Aquaporin-Mediated Water and Hydrogen Peroxide Transport Is Involved in Normal Human Spermatozoa Functioning.</title>
        <authorList>
            <person name="Laforenza U."/>
            <person name="Pellavio G."/>
            <person name="Marchetti A.L."/>
            <person name="Omes C."/>
            <person name="Todaro F."/>
            <person name="Gastaldi G."/>
        </authorList>
    </citation>
    <scope>SUBCELLULAR LOCATION</scope>
    <scope>TISSUE SPECIFICITY</scope>
</reference>
<reference key="8">
    <citation type="journal article" date="2019" name="Redox Biol.">
        <title>Human aquaporin-11 guarantees efficient transport of H2O2 across the endoplasmic reticulum membrane.</title>
        <authorList>
            <person name="Bestetti S."/>
            <person name="Galli M."/>
            <person name="Sorrentino I."/>
            <person name="Pinton P."/>
            <person name="Rimessi A."/>
            <person name="Sitia R."/>
            <person name="Medrano-Fernandez I."/>
        </authorList>
    </citation>
    <scope>FUNCTION</scope>
    <scope>TRANSPORTER ACTIVITY</scope>
    <scope>SUBCELLULAR LOCATION</scope>
    <scope>TOPOLOGY</scope>
    <scope>SUBUNIT</scope>
    <scope>NOT GLYCOSYLATED</scope>
</reference>
<organism>
    <name type="scientific">Homo sapiens</name>
    <name type="common">Human</name>
    <dbReference type="NCBI Taxonomy" id="9606"/>
    <lineage>
        <taxon>Eukaryota</taxon>
        <taxon>Metazoa</taxon>
        <taxon>Chordata</taxon>
        <taxon>Craniata</taxon>
        <taxon>Vertebrata</taxon>
        <taxon>Euteleostomi</taxon>
        <taxon>Mammalia</taxon>
        <taxon>Eutheria</taxon>
        <taxon>Euarchontoglires</taxon>
        <taxon>Primates</taxon>
        <taxon>Haplorrhini</taxon>
        <taxon>Catarrhini</taxon>
        <taxon>Hominidae</taxon>
        <taxon>Homo</taxon>
    </lineage>
</organism>
<gene>
    <name evidence="13" type="primary">AQP11</name>
    <name type="synonym">AQPX1</name>
    <name type="ORF">PSEC0027</name>
</gene>
<keyword id="KW-1003">Cell membrane</keyword>
<keyword id="KW-0968">Cytoplasmic vesicle</keyword>
<keyword id="KW-1015">Disulfide bond</keyword>
<keyword id="KW-0256">Endoplasmic reticulum</keyword>
<keyword id="KW-0472">Membrane</keyword>
<keyword id="KW-1267">Proteomics identification</keyword>
<keyword id="KW-1185">Reference proteome</keyword>
<keyword id="KW-0677">Repeat</keyword>
<keyword id="KW-0812">Transmembrane</keyword>
<keyword id="KW-1133">Transmembrane helix</keyword>
<keyword id="KW-0813">Transport</keyword>
<name>AQP11_HUMAN</name>
<protein>
    <recommendedName>
        <fullName evidence="12">Aquaporin-11</fullName>
        <shortName evidence="12">AQP-11</shortName>
    </recommendedName>
</protein>
<dbReference type="EMBL" id="AB028147">
    <property type="protein sequence ID" value="BAC45004.1"/>
    <property type="molecule type" value="mRNA"/>
</dbReference>
<dbReference type="EMBL" id="AK075346">
    <property type="protein sequence ID" value="BAC11558.1"/>
    <property type="molecule type" value="mRNA"/>
</dbReference>
<dbReference type="EMBL" id="BC040443">
    <property type="protein sequence ID" value="AAH40443.1"/>
    <property type="molecule type" value="mRNA"/>
</dbReference>
<dbReference type="CCDS" id="CCDS8251.1"/>
<dbReference type="RefSeq" id="NP_766627.1">
    <property type="nucleotide sequence ID" value="NM_173039.3"/>
</dbReference>
<dbReference type="SMR" id="Q8NBQ7"/>
<dbReference type="BioGRID" id="129399">
    <property type="interactions" value="1"/>
</dbReference>
<dbReference type="FunCoup" id="Q8NBQ7">
    <property type="interactions" value="1116"/>
</dbReference>
<dbReference type="IntAct" id="Q8NBQ7">
    <property type="interactions" value="1"/>
</dbReference>
<dbReference type="STRING" id="9606.ENSP00000318770"/>
<dbReference type="TCDB" id="1.A.8.4.1">
    <property type="family name" value="the major intrinsic protein (mip) family"/>
</dbReference>
<dbReference type="BioMuta" id="AQP11"/>
<dbReference type="DMDM" id="47115841"/>
<dbReference type="jPOST" id="Q8NBQ7"/>
<dbReference type="MassIVE" id="Q8NBQ7"/>
<dbReference type="PaxDb" id="9606-ENSP00000318770"/>
<dbReference type="PeptideAtlas" id="Q8NBQ7"/>
<dbReference type="ProteomicsDB" id="72810"/>
<dbReference type="Antibodypedia" id="48098">
    <property type="antibodies" value="115 antibodies from 26 providers"/>
</dbReference>
<dbReference type="DNASU" id="282679"/>
<dbReference type="Ensembl" id="ENST00000313578.4">
    <property type="protein sequence ID" value="ENSP00000318770.3"/>
    <property type="gene ID" value="ENSG00000178301.4"/>
</dbReference>
<dbReference type="GeneID" id="282679"/>
<dbReference type="KEGG" id="hsa:282679"/>
<dbReference type="MANE-Select" id="ENST00000313578.4">
    <property type="protein sequence ID" value="ENSP00000318770.3"/>
    <property type="RefSeq nucleotide sequence ID" value="NM_173039.3"/>
    <property type="RefSeq protein sequence ID" value="NP_766627.1"/>
</dbReference>
<dbReference type="UCSC" id="uc001oyj.4">
    <property type="organism name" value="human"/>
</dbReference>
<dbReference type="AGR" id="HGNC:19940"/>
<dbReference type="CTD" id="282679"/>
<dbReference type="DisGeNET" id="282679"/>
<dbReference type="GeneCards" id="AQP11"/>
<dbReference type="HGNC" id="HGNC:19940">
    <property type="gene designation" value="AQP11"/>
</dbReference>
<dbReference type="HPA" id="ENSG00000178301">
    <property type="expression patterns" value="Tissue enhanced (intestine, liver)"/>
</dbReference>
<dbReference type="MIM" id="609914">
    <property type="type" value="gene"/>
</dbReference>
<dbReference type="neXtProt" id="NX_Q8NBQ7"/>
<dbReference type="OpenTargets" id="ENSG00000178301"/>
<dbReference type="PharmGKB" id="PA134949682"/>
<dbReference type="VEuPathDB" id="HostDB:ENSG00000178301"/>
<dbReference type="eggNOG" id="ENOG502S15B">
    <property type="taxonomic scope" value="Eukaryota"/>
</dbReference>
<dbReference type="GeneTree" id="ENSGT00530000063816"/>
<dbReference type="HOGENOM" id="CLU_074449_0_0_1"/>
<dbReference type="InParanoid" id="Q8NBQ7"/>
<dbReference type="OMA" id="EHFTVYW"/>
<dbReference type="OrthoDB" id="9894770at2759"/>
<dbReference type="PAN-GO" id="Q8NBQ7">
    <property type="GO annotations" value="2 GO annotations based on evolutionary models"/>
</dbReference>
<dbReference type="PhylomeDB" id="Q8NBQ7"/>
<dbReference type="TreeFam" id="TF320251"/>
<dbReference type="PathwayCommons" id="Q8NBQ7"/>
<dbReference type="Reactome" id="R-HSA-432047">
    <property type="pathway name" value="Passive transport by Aquaporins"/>
</dbReference>
<dbReference type="SignaLink" id="Q8NBQ7"/>
<dbReference type="BioGRID-ORCS" id="282679">
    <property type="hits" value="12 hits in 1154 CRISPR screens"/>
</dbReference>
<dbReference type="CD-CODE" id="91857CE7">
    <property type="entry name" value="Nucleolus"/>
</dbReference>
<dbReference type="ChiTaRS" id="AQP11">
    <property type="organism name" value="human"/>
</dbReference>
<dbReference type="GenomeRNAi" id="282679"/>
<dbReference type="Pharos" id="Q8NBQ7">
    <property type="development level" value="Tbio"/>
</dbReference>
<dbReference type="PRO" id="PR:Q8NBQ7"/>
<dbReference type="Proteomes" id="UP000005640">
    <property type="component" value="Chromosome 11"/>
</dbReference>
<dbReference type="RNAct" id="Q8NBQ7">
    <property type="molecule type" value="protein"/>
</dbReference>
<dbReference type="Bgee" id="ENSG00000178301">
    <property type="expression patterns" value="Expressed in jejunal mucosa and 107 other cell types or tissues"/>
</dbReference>
<dbReference type="GO" id="GO:0009986">
    <property type="term" value="C:cell surface"/>
    <property type="evidence" value="ECO:0000314"/>
    <property type="project" value="UniProtKB"/>
</dbReference>
<dbReference type="GO" id="GO:0005737">
    <property type="term" value="C:cytoplasm"/>
    <property type="evidence" value="ECO:0000318"/>
    <property type="project" value="GO_Central"/>
</dbReference>
<dbReference type="GO" id="GO:0030659">
    <property type="term" value="C:cytoplasmic vesicle membrane"/>
    <property type="evidence" value="ECO:0007669"/>
    <property type="project" value="UniProtKB-SubCell"/>
</dbReference>
<dbReference type="GO" id="GO:0005783">
    <property type="term" value="C:endoplasmic reticulum"/>
    <property type="evidence" value="ECO:0000314"/>
    <property type="project" value="UniProtKB"/>
</dbReference>
<dbReference type="GO" id="GO:0005789">
    <property type="term" value="C:endoplasmic reticulum membrane"/>
    <property type="evidence" value="ECO:0007669"/>
    <property type="project" value="UniProtKB-SubCell"/>
</dbReference>
<dbReference type="GO" id="GO:0043231">
    <property type="term" value="C:intracellular membrane-bounded organelle"/>
    <property type="evidence" value="ECO:0000314"/>
    <property type="project" value="HPA"/>
</dbReference>
<dbReference type="GO" id="GO:0005886">
    <property type="term" value="C:plasma membrane"/>
    <property type="evidence" value="ECO:0000314"/>
    <property type="project" value="UniProtKB"/>
</dbReference>
<dbReference type="GO" id="GO:0015267">
    <property type="term" value="F:channel activity"/>
    <property type="evidence" value="ECO:0000318"/>
    <property type="project" value="GO_Central"/>
</dbReference>
<dbReference type="GO" id="GO:0015254">
    <property type="term" value="F:glycerol channel activity"/>
    <property type="evidence" value="ECO:0000315"/>
    <property type="project" value="UniProtKB"/>
</dbReference>
<dbReference type="GO" id="GO:0140070">
    <property type="term" value="F:hydrogen peroxide channel activity"/>
    <property type="evidence" value="ECO:0000314"/>
    <property type="project" value="UniProtKB"/>
</dbReference>
<dbReference type="GO" id="GO:0015250">
    <property type="term" value="F:water channel activity"/>
    <property type="evidence" value="ECO:0000314"/>
    <property type="project" value="UniProtKB"/>
</dbReference>
<dbReference type="GO" id="GO:0048388">
    <property type="term" value="P:endosomal lumen acidification"/>
    <property type="evidence" value="ECO:0007669"/>
    <property type="project" value="Ensembl"/>
</dbReference>
<dbReference type="GO" id="GO:0015793">
    <property type="term" value="P:glycerol transmembrane transport"/>
    <property type="evidence" value="ECO:0000315"/>
    <property type="project" value="UniProtKB"/>
</dbReference>
<dbReference type="GO" id="GO:0080170">
    <property type="term" value="P:hydrogen peroxide transmembrane transport"/>
    <property type="evidence" value="ECO:0000315"/>
    <property type="project" value="UniProtKB"/>
</dbReference>
<dbReference type="GO" id="GO:0032364">
    <property type="term" value="P:intracellular oxygen homeostasis"/>
    <property type="evidence" value="ECO:0007669"/>
    <property type="project" value="Ensembl"/>
</dbReference>
<dbReference type="GO" id="GO:0009992">
    <property type="term" value="P:intracellular water homeostasis"/>
    <property type="evidence" value="ECO:0000314"/>
    <property type="project" value="UniProtKB"/>
</dbReference>
<dbReference type="GO" id="GO:0050680">
    <property type="term" value="P:negative regulation of epithelial cell proliferation"/>
    <property type="evidence" value="ECO:0000250"/>
    <property type="project" value="UniProtKB"/>
</dbReference>
<dbReference type="GO" id="GO:1904293">
    <property type="term" value="P:negative regulation of ERAD pathway"/>
    <property type="evidence" value="ECO:0000250"/>
    <property type="project" value="UniProtKB"/>
</dbReference>
<dbReference type="GO" id="GO:1903573">
    <property type="term" value="P:negative regulation of response to endoplasmic reticulum stress"/>
    <property type="evidence" value="ECO:0000250"/>
    <property type="project" value="UniProtKB"/>
</dbReference>
<dbReference type="GO" id="GO:0008284">
    <property type="term" value="P:positive regulation of cell population proliferation"/>
    <property type="evidence" value="ECO:0000315"/>
    <property type="project" value="UniProtKB"/>
</dbReference>
<dbReference type="GO" id="GO:0006486">
    <property type="term" value="P:protein glycosylation"/>
    <property type="evidence" value="ECO:0000250"/>
    <property type="project" value="UniProtKB"/>
</dbReference>
<dbReference type="GO" id="GO:0051260">
    <property type="term" value="P:protein homooligomerization"/>
    <property type="evidence" value="ECO:0000314"/>
    <property type="project" value="UniProtKB"/>
</dbReference>
<dbReference type="GO" id="GO:0006612">
    <property type="term" value="P:protein targeting to membrane"/>
    <property type="evidence" value="ECO:0000250"/>
    <property type="project" value="UniProtKB"/>
</dbReference>
<dbReference type="GO" id="GO:0072014">
    <property type="term" value="P:proximal tubule development"/>
    <property type="evidence" value="ECO:0000250"/>
    <property type="project" value="UniProtKB"/>
</dbReference>
<dbReference type="GO" id="GO:0006833">
    <property type="term" value="P:water transport"/>
    <property type="evidence" value="ECO:0000315"/>
    <property type="project" value="UniProtKB"/>
</dbReference>
<dbReference type="FunFam" id="1.20.1080.10:FF:000016">
    <property type="entry name" value="Aquaporin"/>
    <property type="match status" value="1"/>
</dbReference>
<dbReference type="Gene3D" id="1.20.1080.10">
    <property type="entry name" value="Glycerol uptake facilitator protein"/>
    <property type="match status" value="1"/>
</dbReference>
<dbReference type="InterPro" id="IPR051883">
    <property type="entry name" value="AQP11/12_channel"/>
</dbReference>
<dbReference type="InterPro" id="IPR023271">
    <property type="entry name" value="Aquaporin-like"/>
</dbReference>
<dbReference type="InterPro" id="IPR023266">
    <property type="entry name" value="Aquaporin_11"/>
</dbReference>
<dbReference type="InterPro" id="IPR016697">
    <property type="entry name" value="Aquaporin_11/12"/>
</dbReference>
<dbReference type="InterPro" id="IPR000425">
    <property type="entry name" value="MIP"/>
</dbReference>
<dbReference type="PANTHER" id="PTHR21191">
    <property type="entry name" value="AQUAPORIN"/>
    <property type="match status" value="1"/>
</dbReference>
<dbReference type="PANTHER" id="PTHR21191:SF7">
    <property type="entry name" value="AQUAPORIN-11"/>
    <property type="match status" value="1"/>
</dbReference>
<dbReference type="Pfam" id="PF00230">
    <property type="entry name" value="MIP"/>
    <property type="match status" value="1"/>
</dbReference>
<dbReference type="PIRSF" id="PIRSF017529">
    <property type="entry name" value="Aquaporin_11/12"/>
    <property type="match status" value="1"/>
</dbReference>
<dbReference type="PRINTS" id="PR02024">
    <property type="entry name" value="AQUAPORIN11"/>
</dbReference>
<dbReference type="PRINTS" id="PR00783">
    <property type="entry name" value="MINTRINSICP"/>
</dbReference>
<dbReference type="SUPFAM" id="SSF81338">
    <property type="entry name" value="Aquaporin-like"/>
    <property type="match status" value="1"/>
</dbReference>
<comment type="function">
    <text evidence="2 6 7 9">Channel protein that facilitates the transport of water, glycerol and hydrogen peroxide across membrane of cell or organelles guaranteeing intracellular homeostasis in several organes like liver, kidney and brain (PubMed:24845055, PubMed:24918044, PubMed:31546170). In situation of stress, participates in endoplasmic reticulum (ER) homeostasis by regulating redox homeostasis through the transport of hydrogen peroxide across the endoplasmic reticulum membrane thereby regulating the oxidative stress through the NADPH oxidase 2 pathway (PubMed:31546170). Plays a role by maintaining an environment suitable for translation or protein foldings in the ER lumen namely by participating in the PKD1 glycosylation processing resulting in regulation of PKD1 membrane trafficking thereby preventing the accumulation of unfolding protein in ER (By similarity). Plays a role in the proximal tubule function by regulating its endosomal acidification (By similarity). May play a role in postnatal kidney development (By similarity).</text>
</comment>
<comment type="catalytic activity">
    <reaction evidence="6 7">
        <text>H2O(in) = H2O(out)</text>
        <dbReference type="Rhea" id="RHEA:29667"/>
        <dbReference type="ChEBI" id="CHEBI:15377"/>
    </reaction>
</comment>
<comment type="catalytic activity">
    <reaction evidence="6">
        <text>glycerol(in) = glycerol(out)</text>
        <dbReference type="Rhea" id="RHEA:29675"/>
        <dbReference type="ChEBI" id="CHEBI:17754"/>
    </reaction>
</comment>
<comment type="catalytic activity">
    <reaction evidence="9">
        <text>H2O2(out) = H2O2(in)</text>
        <dbReference type="Rhea" id="RHEA:74375"/>
        <dbReference type="ChEBI" id="CHEBI:16240"/>
    </reaction>
</comment>
<comment type="subunit">
    <text evidence="2 7 9">Homodimer; disulfide-linked (By similarity). Homotetramer (PubMed:31546170). Can also form homomultimer (PubMed:24918044, PubMed:31546170).</text>
</comment>
<comment type="subcellular location">
    <subcellularLocation>
        <location evidence="7 9">Endoplasmic reticulum membrane</location>
        <topology evidence="7">Multi-pass membrane protein</topology>
    </subcellularLocation>
    <subcellularLocation>
        <location evidence="8">Cytoplasmic vesicle membrane</location>
        <topology evidence="7">Multi-pass membrane protein</topology>
    </subcellularLocation>
    <subcellularLocation>
        <location evidence="1">Cell membrane</location>
        <topology evidence="7">Multi-pass membrane protein</topology>
    </subcellularLocation>
    <text evidence="6 8 9">Localizes mainly to the periphery of lipid droplets (PubMed:24845055). Localizes to cytoplasmic vesicles in maturing spermatozoa (PubMed:28042826). It accumulates partly in mitochondrial-associated endoplasmic reticulum membranes (PubMed:31546170).</text>
</comment>
<comment type="tissue specificity">
    <text evidence="5 6 8">Detected in the sperm head and tail (at protein level) (PubMed:28042826). Expressed in subcutaneous adipocytes (PubMed:24845055). Expressed in testis, kidney and ejaculated spermatozoa (PubMed:19812234).</text>
</comment>
<comment type="domain">
    <text evidence="2">The NPC motif is essential for oligomerization and water permeability function.</text>
</comment>
<comment type="PTM">
    <text evidence="9">Not glycosylated.</text>
</comment>
<comment type="similarity">
    <text evidence="10">Belongs to the MIP/aquaporin (TC 1.A.8) family. AQP11/AQP12 subfamily.</text>
</comment>